<accession>P9WMY8</accession>
<accession>L0TCY4</accession>
<accession>O53279</accession>
<accession>Q7D693</accession>
<gene>
    <name type="ordered locus">MT3116</name>
</gene>
<reference key="1">
    <citation type="journal article" date="2002" name="J. Bacteriol.">
        <title>Whole-genome comparison of Mycobacterium tuberculosis clinical and laboratory strains.</title>
        <authorList>
            <person name="Fleischmann R.D."/>
            <person name="Alland D."/>
            <person name="Eisen J.A."/>
            <person name="Carpenter L."/>
            <person name="White O."/>
            <person name="Peterson J.D."/>
            <person name="DeBoy R.T."/>
            <person name="Dodson R.J."/>
            <person name="Gwinn M.L."/>
            <person name="Haft D.H."/>
            <person name="Hickey E.K."/>
            <person name="Kolonay J.F."/>
            <person name="Nelson W.C."/>
            <person name="Umayam L.A."/>
            <person name="Ermolaeva M.D."/>
            <person name="Salzberg S.L."/>
            <person name="Delcher A."/>
            <person name="Utterback T.R."/>
            <person name="Weidman J.F."/>
            <person name="Khouri H.M."/>
            <person name="Gill J."/>
            <person name="Mikula A."/>
            <person name="Bishai W."/>
            <person name="Jacobs W.R. Jr."/>
            <person name="Venter J.C."/>
            <person name="Fraser C.M."/>
        </authorList>
    </citation>
    <scope>NUCLEOTIDE SEQUENCE [LARGE SCALE GENOMIC DNA]</scope>
    <source>
        <strain>CDC 1551 / Oshkosh</strain>
    </source>
</reference>
<comment type="function">
    <text evidence="1">Glucosyltransferase that uses UDP-glucose as the sugar donor to elongate alpha-(1-&gt;4)-glucans. Is involved in the biosynthesis of both 6-O-methylglucosyl lipopolysaccharides (MGLP) and glycogen. May also use ADP-glucose as substrate (By similarity).</text>
</comment>
<comment type="catalytic activity">
    <reaction>
        <text>[(1-&gt;4)-alpha-D-glucosyl](n) + UDP-alpha-D-glucose = [(1-&gt;4)-alpha-D-glucosyl](n+1) + UDP + H(+)</text>
        <dbReference type="Rhea" id="RHEA:18549"/>
        <dbReference type="Rhea" id="RHEA-COMP:9584"/>
        <dbReference type="Rhea" id="RHEA-COMP:9587"/>
        <dbReference type="ChEBI" id="CHEBI:15378"/>
        <dbReference type="ChEBI" id="CHEBI:15444"/>
        <dbReference type="ChEBI" id="CHEBI:58223"/>
        <dbReference type="ChEBI" id="CHEBI:58885"/>
        <dbReference type="EC" id="2.4.1.11"/>
    </reaction>
</comment>
<comment type="pathway">
    <text>Glycan biosynthesis; glycogen biosynthesis.</text>
</comment>
<comment type="similarity">
    <text evidence="2">Belongs to the glycosyltransferase group 1 family.</text>
</comment>
<protein>
    <recommendedName>
        <fullName>Glycogen synthase</fullName>
        <ecNumber>2.4.1.11</ecNumber>
    </recommendedName>
    <alternativeName>
        <fullName>Alpha-1,4-glucosyltransferase MT3116</fullName>
    </alternativeName>
    <alternativeName>
        <fullName>UDP-glucose--glycogen glucosyltransferase</fullName>
    </alternativeName>
</protein>
<name>GLGSY_MYCTO</name>
<proteinExistence type="inferred from homology"/>
<organism>
    <name type="scientific">Mycobacterium tuberculosis (strain CDC 1551 / Oshkosh)</name>
    <dbReference type="NCBI Taxonomy" id="83331"/>
    <lineage>
        <taxon>Bacteria</taxon>
        <taxon>Bacillati</taxon>
        <taxon>Actinomycetota</taxon>
        <taxon>Actinomycetes</taxon>
        <taxon>Mycobacteriales</taxon>
        <taxon>Mycobacteriaceae</taxon>
        <taxon>Mycobacterium</taxon>
        <taxon>Mycobacterium tuberculosis complex</taxon>
    </lineage>
</organism>
<feature type="chain" id="PRO_0000427219" description="Glycogen synthase">
    <location>
        <begin position="1"/>
        <end position="414"/>
    </location>
</feature>
<keyword id="KW-0119">Carbohydrate metabolism</keyword>
<keyword id="KW-0320">Glycogen biosynthesis</keyword>
<keyword id="KW-0321">Glycogen metabolism</keyword>
<keyword id="KW-0328">Glycosyltransferase</keyword>
<keyword id="KW-1185">Reference proteome</keyword>
<keyword id="KW-0808">Transferase</keyword>
<evidence type="ECO:0000250" key="1"/>
<evidence type="ECO:0000305" key="2"/>
<sequence length="414" mass="44805">MRILMVSWEYPPVVIGGLGRHVHHLSTALAAAGHDVVVLSRCPSGTDPSTHPSSDEVTEGVRVIAAAQDPHEFTFGNDMMAWTLAMGHAMIRAGLRLKKLGTDRSWRPDVVHAHDWLVAHPAIALAQFYDVPMVSTIHATEAGRHSGWVSGALSRQVHAVESWLVRESDSLITCSASMNDEITELFGPGLAEITVIRNGIDAARWPFAARRPRTGPAELLYVGRLEYEKGVHDAIAALPRLRRTHPGTTLTIAGEGTQQDWLIDQARKHRVLRATRFVGHLDHTELLALLHRADAAVLPSHYEPFGLVALEAAAAGTPLVTSNIGGLGEAVINGQTGVSCAPRDVAGLAAAVRSVLDDPAAAQRRARAARQRLTSDFDWQTVATATAQVYLAAKRGERQPQPRLPIVEHALPDR</sequence>
<dbReference type="EC" id="2.4.1.11"/>
<dbReference type="EMBL" id="AE000516">
    <property type="protein sequence ID" value="AAK47446.1"/>
    <property type="molecule type" value="Genomic_DNA"/>
</dbReference>
<dbReference type="PIR" id="C70859">
    <property type="entry name" value="C70859"/>
</dbReference>
<dbReference type="RefSeq" id="WP_003415928.1">
    <property type="nucleotide sequence ID" value="NZ_KK341227.1"/>
</dbReference>
<dbReference type="SMR" id="P9WMY8"/>
<dbReference type="CAZy" id="GT4">
    <property type="family name" value="Glycosyltransferase Family 4"/>
</dbReference>
<dbReference type="KEGG" id="mtc:MT3116"/>
<dbReference type="PATRIC" id="fig|83331.31.peg.3358"/>
<dbReference type="HOGENOM" id="CLU_009583_2_3_11"/>
<dbReference type="UniPathway" id="UPA00164"/>
<dbReference type="Proteomes" id="UP000001020">
    <property type="component" value="Chromosome"/>
</dbReference>
<dbReference type="GO" id="GO:0004373">
    <property type="term" value="F:alpha-1,4-glucan glucosyltransferase (UDP-glucose donor) activity"/>
    <property type="evidence" value="ECO:0007669"/>
    <property type="project" value="UniProtKB-EC"/>
</dbReference>
<dbReference type="GO" id="GO:1901137">
    <property type="term" value="P:carbohydrate derivative biosynthetic process"/>
    <property type="evidence" value="ECO:0007669"/>
    <property type="project" value="UniProtKB-ARBA"/>
</dbReference>
<dbReference type="GO" id="GO:0005978">
    <property type="term" value="P:glycogen biosynthetic process"/>
    <property type="evidence" value="ECO:0007669"/>
    <property type="project" value="UniProtKB-UniPathway"/>
</dbReference>
<dbReference type="GO" id="GO:0008610">
    <property type="term" value="P:lipid biosynthetic process"/>
    <property type="evidence" value="ECO:0007669"/>
    <property type="project" value="UniProtKB-ARBA"/>
</dbReference>
<dbReference type="GO" id="GO:1903509">
    <property type="term" value="P:liposaccharide metabolic process"/>
    <property type="evidence" value="ECO:0007669"/>
    <property type="project" value="UniProtKB-ARBA"/>
</dbReference>
<dbReference type="CDD" id="cd03801">
    <property type="entry name" value="GT4_PimA-like"/>
    <property type="match status" value="1"/>
</dbReference>
<dbReference type="FunFam" id="3.40.50.2000:FF:000220">
    <property type="entry name" value="Glycogen synthase"/>
    <property type="match status" value="1"/>
</dbReference>
<dbReference type="FunFam" id="3.40.50.2000:FF:000242">
    <property type="entry name" value="Glycogen synthase"/>
    <property type="match status" value="1"/>
</dbReference>
<dbReference type="Gene3D" id="3.40.50.2000">
    <property type="entry name" value="Glycogen Phosphorylase B"/>
    <property type="match status" value="2"/>
</dbReference>
<dbReference type="InterPro" id="IPR001296">
    <property type="entry name" value="Glyco_trans_1"/>
</dbReference>
<dbReference type="InterPro" id="IPR028098">
    <property type="entry name" value="Glyco_trans_4-like_N"/>
</dbReference>
<dbReference type="InterPro" id="IPR050194">
    <property type="entry name" value="Glycosyltransferase_grp1"/>
</dbReference>
<dbReference type="PANTHER" id="PTHR45947">
    <property type="entry name" value="SULFOQUINOVOSYL TRANSFERASE SQD2"/>
    <property type="match status" value="1"/>
</dbReference>
<dbReference type="PANTHER" id="PTHR45947:SF3">
    <property type="entry name" value="SULFOQUINOVOSYL TRANSFERASE SQD2"/>
    <property type="match status" value="1"/>
</dbReference>
<dbReference type="Pfam" id="PF13439">
    <property type="entry name" value="Glyco_transf_4"/>
    <property type="match status" value="1"/>
</dbReference>
<dbReference type="Pfam" id="PF00534">
    <property type="entry name" value="Glycos_transf_1"/>
    <property type="match status" value="1"/>
</dbReference>
<dbReference type="SUPFAM" id="SSF53756">
    <property type="entry name" value="UDP-Glycosyltransferase/glycogen phosphorylase"/>
    <property type="match status" value="1"/>
</dbReference>